<protein>
    <recommendedName>
        <fullName evidence="1">Fructose-1,6-bisphosphatase class 3</fullName>
        <shortName evidence="1">FBPase class 3</shortName>
        <ecNumber evidence="1">3.1.3.11</ecNumber>
    </recommendedName>
    <alternativeName>
        <fullName evidence="1">D-fructose-1,6-bisphosphate 1-phosphohydrolase class 3</fullName>
    </alternativeName>
</protein>
<proteinExistence type="inferred from homology"/>
<reference key="1">
    <citation type="journal article" date="2008" name="J. Bacteriol.">
        <title>Genome sequence of Staphylococcus aureus strain Newman and comparative analysis of staphylococcal genomes: polymorphism and evolution of two major pathogenicity islands.</title>
        <authorList>
            <person name="Baba T."/>
            <person name="Bae T."/>
            <person name="Schneewind O."/>
            <person name="Takeuchi F."/>
            <person name="Hiramatsu K."/>
        </authorList>
    </citation>
    <scope>NUCLEOTIDE SEQUENCE [LARGE SCALE GENOMIC DNA]</scope>
    <source>
        <strain>Newman</strain>
    </source>
</reference>
<keyword id="KW-0119">Carbohydrate metabolism</keyword>
<keyword id="KW-0378">Hydrolase</keyword>
<keyword id="KW-0464">Manganese</keyword>
<dbReference type="EC" id="3.1.3.11" evidence="1"/>
<dbReference type="EMBL" id="AP009351">
    <property type="protein sequence ID" value="BAF68686.1"/>
    <property type="molecule type" value="Genomic_DNA"/>
</dbReference>
<dbReference type="RefSeq" id="WP_000192168.1">
    <property type="nucleotide sequence ID" value="NZ_JBBIAE010000012.1"/>
</dbReference>
<dbReference type="KEGG" id="sae:NWMN_2414"/>
<dbReference type="HOGENOM" id="CLU_028392_2_0_9"/>
<dbReference type="UniPathway" id="UPA00138"/>
<dbReference type="Proteomes" id="UP000006386">
    <property type="component" value="Chromosome"/>
</dbReference>
<dbReference type="GO" id="GO:0042132">
    <property type="term" value="F:fructose 1,6-bisphosphate 1-phosphatase activity"/>
    <property type="evidence" value="ECO:0007669"/>
    <property type="project" value="UniProtKB-UniRule"/>
</dbReference>
<dbReference type="GO" id="GO:0006094">
    <property type="term" value="P:gluconeogenesis"/>
    <property type="evidence" value="ECO:0007669"/>
    <property type="project" value="UniProtKB-UniRule"/>
</dbReference>
<dbReference type="Gene3D" id="3.60.21.10">
    <property type="match status" value="1"/>
</dbReference>
<dbReference type="HAMAP" id="MF_01854">
    <property type="entry name" value="FBPase_class3"/>
    <property type="match status" value="1"/>
</dbReference>
<dbReference type="InterPro" id="IPR009164">
    <property type="entry name" value="FBPtase_class3"/>
</dbReference>
<dbReference type="InterPro" id="IPR029052">
    <property type="entry name" value="Metallo-depent_PP-like"/>
</dbReference>
<dbReference type="Pfam" id="PF06874">
    <property type="entry name" value="FBPase_2"/>
    <property type="match status" value="1"/>
</dbReference>
<dbReference type="PIRSF" id="PIRSF000906">
    <property type="entry name" value="FBPtase_Bacill"/>
    <property type="match status" value="1"/>
</dbReference>
<dbReference type="SUPFAM" id="SSF56300">
    <property type="entry name" value="Metallo-dependent phosphatases"/>
    <property type="match status" value="2"/>
</dbReference>
<accession>A6QK04</accession>
<evidence type="ECO:0000255" key="1">
    <source>
        <dbReference type="HAMAP-Rule" id="MF_01854"/>
    </source>
</evidence>
<evidence type="ECO:0000256" key="2">
    <source>
        <dbReference type="SAM" id="MobiDB-lite"/>
    </source>
</evidence>
<sequence length="654" mass="76175">MTQITEKELKKKYLDLLSQNFDTPEKLATEIINLESILELPKGTEHFVSDLHGEYEAFQHVLRNGSGNVRAKINDIFKERLSTKELNDLTALVYYPEDKLKLIKSDFQNCGQLNVWYITTIEHLIELIKYCSSKYTRSKLRKALPKQYVYIIEELLYKSNEYQNKKSYYETLVNQVIELKQADDLIIGLAYSVQRLVVDHLHVVGDIYDRGPQPDKIMDTLINYHSLDIQWGNHDVLWVGAYAGSKVCLANLLRICARYDNLDIIEDAYGINLRPLLTLAEKYYDADNPAFKPKKRPDKHERLTQREESQITKIHQAIAMIQFKLEIPIIKRRPNFEMEERLVLEKVNYDTNEITVYGNTYPLKDTCFQTVNRDNPAELLPEEEEVMNKLLLSFQQSEKLRRHMSFLMRKGSLYLPYNGNLLIHGCIPVDENGEMESFEIDGHTYSGQELLDVFEYHVRKSFDEKENTDDLSTDLVWYLWTGKYSSLFGKRAMTTFERYFIADKASHKEEKNPYYHLREDVNMVRKMLSDFGLNPDEGRIINGHTPVKEINGEDPIKADGKMLVIDGGFSKAYQSTTGIAGYTLLYNSFGMQLVAHQQFNAKEKILSEGIDELSIKRVVDKELQRKKIRDTNIGKDLQAQIDILKMLMHDRYLD</sequence>
<feature type="chain" id="PRO_0000359993" description="Fructose-1,6-bisphosphatase class 3">
    <location>
        <begin position="1"/>
        <end position="654"/>
    </location>
</feature>
<feature type="region of interest" description="Disordered" evidence="2">
    <location>
        <begin position="288"/>
        <end position="307"/>
    </location>
</feature>
<feature type="compositionally biased region" description="Basic and acidic residues" evidence="2">
    <location>
        <begin position="298"/>
        <end position="307"/>
    </location>
</feature>
<gene>
    <name evidence="1" type="primary">fbp</name>
    <name type="ordered locus">NWMN_2414</name>
</gene>
<comment type="catalytic activity">
    <reaction evidence="1">
        <text>beta-D-fructose 1,6-bisphosphate + H2O = beta-D-fructose 6-phosphate + phosphate</text>
        <dbReference type="Rhea" id="RHEA:11064"/>
        <dbReference type="ChEBI" id="CHEBI:15377"/>
        <dbReference type="ChEBI" id="CHEBI:32966"/>
        <dbReference type="ChEBI" id="CHEBI:43474"/>
        <dbReference type="ChEBI" id="CHEBI:57634"/>
        <dbReference type="EC" id="3.1.3.11"/>
    </reaction>
</comment>
<comment type="cofactor">
    <cofactor evidence="1">
        <name>Mn(2+)</name>
        <dbReference type="ChEBI" id="CHEBI:29035"/>
    </cofactor>
</comment>
<comment type="pathway">
    <text evidence="1">Carbohydrate biosynthesis; gluconeogenesis.</text>
</comment>
<comment type="similarity">
    <text evidence="1">Belongs to the FBPase class 3 family.</text>
</comment>
<name>F16PC_STAAE</name>
<organism>
    <name type="scientific">Staphylococcus aureus (strain Newman)</name>
    <dbReference type="NCBI Taxonomy" id="426430"/>
    <lineage>
        <taxon>Bacteria</taxon>
        <taxon>Bacillati</taxon>
        <taxon>Bacillota</taxon>
        <taxon>Bacilli</taxon>
        <taxon>Bacillales</taxon>
        <taxon>Staphylococcaceae</taxon>
        <taxon>Staphylococcus</taxon>
    </lineage>
</organism>